<proteinExistence type="inferred from homology"/>
<gene>
    <name evidence="1" type="primary">ilvC</name>
    <name type="ordered locus">TWT_207</name>
</gene>
<evidence type="ECO:0000255" key="1">
    <source>
        <dbReference type="HAMAP-Rule" id="MF_00435"/>
    </source>
</evidence>
<evidence type="ECO:0000255" key="2">
    <source>
        <dbReference type="PROSITE-ProRule" id="PRU01197"/>
    </source>
</evidence>
<evidence type="ECO:0000255" key="3">
    <source>
        <dbReference type="PROSITE-ProRule" id="PRU01198"/>
    </source>
</evidence>
<protein>
    <recommendedName>
        <fullName evidence="1">Ketol-acid reductoisomerase (NADP(+))</fullName>
        <shortName evidence="1">KARI</shortName>
        <ecNumber evidence="1">1.1.1.86</ecNumber>
    </recommendedName>
    <alternativeName>
        <fullName evidence="1">Acetohydroxy-acid isomeroreductase</fullName>
        <shortName evidence="1">AHIR</shortName>
    </alternativeName>
    <alternativeName>
        <fullName evidence="1">Alpha-keto-beta-hydroxylacyl reductoisomerase</fullName>
    </alternativeName>
    <alternativeName>
        <fullName evidence="1">Ketol-acid reductoisomerase type 1</fullName>
    </alternativeName>
    <alternativeName>
        <fullName evidence="1">Ketol-acid reductoisomerase type I</fullName>
    </alternativeName>
</protein>
<reference key="1">
    <citation type="journal article" date="2003" name="Genome Res.">
        <title>Tropheryma whipplei twist: a human pathogenic Actinobacteria with a reduced genome.</title>
        <authorList>
            <person name="Raoult D."/>
            <person name="Ogata H."/>
            <person name="Audic S."/>
            <person name="Robert C."/>
            <person name="Suhre K."/>
            <person name="Drancourt M."/>
            <person name="Claverie J.-M."/>
        </authorList>
    </citation>
    <scope>NUCLEOTIDE SEQUENCE [LARGE SCALE GENOMIC DNA]</scope>
    <source>
        <strain>Twist</strain>
    </source>
</reference>
<keyword id="KW-0028">Amino-acid biosynthesis</keyword>
<keyword id="KW-0100">Branched-chain amino acid biosynthesis</keyword>
<keyword id="KW-0460">Magnesium</keyword>
<keyword id="KW-0479">Metal-binding</keyword>
<keyword id="KW-0521">NADP</keyword>
<keyword id="KW-0560">Oxidoreductase</keyword>
<keyword id="KW-1185">Reference proteome</keyword>
<name>ILVC_TROWT</name>
<comment type="function">
    <text evidence="1">Involved in the biosynthesis of branched-chain amino acids (BCAA). Catalyzes an alkyl-migration followed by a ketol-acid reduction of (S)-2-acetolactate (S2AL) to yield (R)-2,3-dihydroxy-isovalerate. In the isomerase reaction, S2AL is rearranged via a Mg-dependent methyl migration to produce 3-hydroxy-3-methyl-2-ketobutyrate (HMKB). In the reductase reaction, this 2-ketoacid undergoes a metal-dependent reduction by NADPH to yield (R)-2,3-dihydroxy-isovalerate.</text>
</comment>
<comment type="catalytic activity">
    <reaction evidence="1">
        <text>(2R)-2,3-dihydroxy-3-methylbutanoate + NADP(+) = (2S)-2-acetolactate + NADPH + H(+)</text>
        <dbReference type="Rhea" id="RHEA:22068"/>
        <dbReference type="ChEBI" id="CHEBI:15378"/>
        <dbReference type="ChEBI" id="CHEBI:49072"/>
        <dbReference type="ChEBI" id="CHEBI:57783"/>
        <dbReference type="ChEBI" id="CHEBI:58349"/>
        <dbReference type="ChEBI" id="CHEBI:58476"/>
        <dbReference type="EC" id="1.1.1.86"/>
    </reaction>
</comment>
<comment type="catalytic activity">
    <reaction evidence="1">
        <text>(2R,3R)-2,3-dihydroxy-3-methylpentanoate + NADP(+) = (S)-2-ethyl-2-hydroxy-3-oxobutanoate + NADPH + H(+)</text>
        <dbReference type="Rhea" id="RHEA:13493"/>
        <dbReference type="ChEBI" id="CHEBI:15378"/>
        <dbReference type="ChEBI" id="CHEBI:49256"/>
        <dbReference type="ChEBI" id="CHEBI:49258"/>
        <dbReference type="ChEBI" id="CHEBI:57783"/>
        <dbReference type="ChEBI" id="CHEBI:58349"/>
        <dbReference type="EC" id="1.1.1.86"/>
    </reaction>
</comment>
<comment type="cofactor">
    <cofactor evidence="1">
        <name>Mg(2+)</name>
        <dbReference type="ChEBI" id="CHEBI:18420"/>
    </cofactor>
    <text evidence="1">Binds 2 magnesium ions per subunit.</text>
</comment>
<comment type="pathway">
    <text evidence="1">Amino-acid biosynthesis; L-isoleucine biosynthesis; L-isoleucine from 2-oxobutanoate: step 2/4.</text>
</comment>
<comment type="pathway">
    <text evidence="1">Amino-acid biosynthesis; L-valine biosynthesis; L-valine from pyruvate: step 2/4.</text>
</comment>
<comment type="similarity">
    <text evidence="1">Belongs to the ketol-acid reductoisomerase family.</text>
</comment>
<dbReference type="EC" id="1.1.1.86" evidence="1"/>
<dbReference type="EMBL" id="AE014184">
    <property type="protein sequence ID" value="AAO44304.1"/>
    <property type="molecule type" value="Genomic_DNA"/>
</dbReference>
<dbReference type="RefSeq" id="WP_011102430.1">
    <property type="nucleotide sequence ID" value="NC_004572.3"/>
</dbReference>
<dbReference type="SMR" id="Q83GP6"/>
<dbReference type="STRING" id="203267.TWT_207"/>
<dbReference type="KEGG" id="twh:TWT_207"/>
<dbReference type="eggNOG" id="COG0059">
    <property type="taxonomic scope" value="Bacteria"/>
</dbReference>
<dbReference type="HOGENOM" id="CLU_033821_0_1_11"/>
<dbReference type="OrthoDB" id="9804088at2"/>
<dbReference type="UniPathway" id="UPA00047">
    <property type="reaction ID" value="UER00056"/>
</dbReference>
<dbReference type="UniPathway" id="UPA00049">
    <property type="reaction ID" value="UER00060"/>
</dbReference>
<dbReference type="Proteomes" id="UP000002200">
    <property type="component" value="Chromosome"/>
</dbReference>
<dbReference type="GO" id="GO:0005829">
    <property type="term" value="C:cytosol"/>
    <property type="evidence" value="ECO:0007669"/>
    <property type="project" value="TreeGrafter"/>
</dbReference>
<dbReference type="GO" id="GO:0004455">
    <property type="term" value="F:ketol-acid reductoisomerase activity"/>
    <property type="evidence" value="ECO:0007669"/>
    <property type="project" value="UniProtKB-UniRule"/>
</dbReference>
<dbReference type="GO" id="GO:0000287">
    <property type="term" value="F:magnesium ion binding"/>
    <property type="evidence" value="ECO:0007669"/>
    <property type="project" value="UniProtKB-UniRule"/>
</dbReference>
<dbReference type="GO" id="GO:0050661">
    <property type="term" value="F:NADP binding"/>
    <property type="evidence" value="ECO:0007669"/>
    <property type="project" value="InterPro"/>
</dbReference>
<dbReference type="GO" id="GO:0009097">
    <property type="term" value="P:isoleucine biosynthetic process"/>
    <property type="evidence" value="ECO:0007669"/>
    <property type="project" value="UniProtKB-UniRule"/>
</dbReference>
<dbReference type="GO" id="GO:0009099">
    <property type="term" value="P:L-valine biosynthetic process"/>
    <property type="evidence" value="ECO:0007669"/>
    <property type="project" value="UniProtKB-UniRule"/>
</dbReference>
<dbReference type="FunFam" id="3.40.50.720:FF:000023">
    <property type="entry name" value="Ketol-acid reductoisomerase (NADP(+))"/>
    <property type="match status" value="1"/>
</dbReference>
<dbReference type="Gene3D" id="6.10.240.10">
    <property type="match status" value="1"/>
</dbReference>
<dbReference type="Gene3D" id="3.40.50.720">
    <property type="entry name" value="NAD(P)-binding Rossmann-like Domain"/>
    <property type="match status" value="1"/>
</dbReference>
<dbReference type="HAMAP" id="MF_00435">
    <property type="entry name" value="IlvC"/>
    <property type="match status" value="1"/>
</dbReference>
<dbReference type="InterPro" id="IPR008927">
    <property type="entry name" value="6-PGluconate_DH-like_C_sf"/>
</dbReference>
<dbReference type="InterPro" id="IPR013023">
    <property type="entry name" value="KARI"/>
</dbReference>
<dbReference type="InterPro" id="IPR000506">
    <property type="entry name" value="KARI_C"/>
</dbReference>
<dbReference type="InterPro" id="IPR013116">
    <property type="entry name" value="KARI_N"/>
</dbReference>
<dbReference type="InterPro" id="IPR014359">
    <property type="entry name" value="KARI_prok"/>
</dbReference>
<dbReference type="InterPro" id="IPR036291">
    <property type="entry name" value="NAD(P)-bd_dom_sf"/>
</dbReference>
<dbReference type="NCBIfam" id="TIGR00465">
    <property type="entry name" value="ilvC"/>
    <property type="match status" value="1"/>
</dbReference>
<dbReference type="NCBIfam" id="NF004017">
    <property type="entry name" value="PRK05479.1"/>
    <property type="match status" value="1"/>
</dbReference>
<dbReference type="PANTHER" id="PTHR21371">
    <property type="entry name" value="KETOL-ACID REDUCTOISOMERASE, MITOCHONDRIAL"/>
    <property type="match status" value="1"/>
</dbReference>
<dbReference type="PANTHER" id="PTHR21371:SF1">
    <property type="entry name" value="KETOL-ACID REDUCTOISOMERASE, MITOCHONDRIAL"/>
    <property type="match status" value="1"/>
</dbReference>
<dbReference type="Pfam" id="PF01450">
    <property type="entry name" value="KARI_C"/>
    <property type="match status" value="1"/>
</dbReference>
<dbReference type="Pfam" id="PF07991">
    <property type="entry name" value="KARI_N"/>
    <property type="match status" value="1"/>
</dbReference>
<dbReference type="PIRSF" id="PIRSF000116">
    <property type="entry name" value="IlvC_gammaproteo"/>
    <property type="match status" value="1"/>
</dbReference>
<dbReference type="SUPFAM" id="SSF48179">
    <property type="entry name" value="6-phosphogluconate dehydrogenase C-terminal domain-like"/>
    <property type="match status" value="1"/>
</dbReference>
<dbReference type="SUPFAM" id="SSF51735">
    <property type="entry name" value="NAD(P)-binding Rossmann-fold domains"/>
    <property type="match status" value="1"/>
</dbReference>
<dbReference type="PROSITE" id="PS51851">
    <property type="entry name" value="KARI_C"/>
    <property type="match status" value="1"/>
</dbReference>
<dbReference type="PROSITE" id="PS51850">
    <property type="entry name" value="KARI_N"/>
    <property type="match status" value="1"/>
</dbReference>
<accession>Q83GP6</accession>
<sequence>MSEIGTRVYTECDADLSLIQNVLVAVIGYGSQGHAQALNLRDSGVNVVIGLKENSASRKSAQDSGFEVLLPQEAAKKAQLISLLVPDPAQRDVYESAIKHNLSEGDALLFSHGFNIRYGYITPPDGVDVLMVAPKGPGHMVRREYLDNRGTPAVFAIEKDASGRCFDLALSYAKGIGALRAGAIQTTFTEETETDLFGEQAVLCGGLEQLIQYGYETLVEAGYQPEVAYFEVLHELKLIIDLIVEGGLSKSRWSISDTAEYGSYVSGPRVIDKHVKENMKKILGEIRSGEFANRFIKDQDSGANEFTQLREIAARHPIEEVGARLRALFSWSK</sequence>
<feature type="chain" id="PRO_0000151377" description="Ketol-acid reductoisomerase (NADP(+))">
    <location>
        <begin position="1"/>
        <end position="333"/>
    </location>
</feature>
<feature type="domain" description="KARI N-terminal Rossmann" evidence="2">
    <location>
        <begin position="6"/>
        <end position="186"/>
    </location>
</feature>
<feature type="domain" description="KARI C-terminal knotted" evidence="3">
    <location>
        <begin position="187"/>
        <end position="332"/>
    </location>
</feature>
<feature type="active site" evidence="1">
    <location>
        <position position="112"/>
    </location>
</feature>
<feature type="binding site" evidence="1">
    <location>
        <begin position="29"/>
        <end position="32"/>
    </location>
    <ligand>
        <name>NADP(+)</name>
        <dbReference type="ChEBI" id="CHEBI:58349"/>
    </ligand>
</feature>
<feature type="binding site" evidence="1">
    <location>
        <position position="52"/>
    </location>
    <ligand>
        <name>NADP(+)</name>
        <dbReference type="ChEBI" id="CHEBI:58349"/>
    </ligand>
</feature>
<feature type="binding site" evidence="1">
    <location>
        <position position="55"/>
    </location>
    <ligand>
        <name>NADP(+)</name>
        <dbReference type="ChEBI" id="CHEBI:58349"/>
    </ligand>
</feature>
<feature type="binding site" evidence="1">
    <location>
        <position position="57"/>
    </location>
    <ligand>
        <name>NADP(+)</name>
        <dbReference type="ChEBI" id="CHEBI:58349"/>
    </ligand>
</feature>
<feature type="binding site" evidence="1">
    <location>
        <begin position="87"/>
        <end position="90"/>
    </location>
    <ligand>
        <name>NADP(+)</name>
        <dbReference type="ChEBI" id="CHEBI:58349"/>
    </ligand>
</feature>
<feature type="binding site" evidence="1">
    <location>
        <position position="138"/>
    </location>
    <ligand>
        <name>NADP(+)</name>
        <dbReference type="ChEBI" id="CHEBI:58349"/>
    </ligand>
</feature>
<feature type="binding site" evidence="1">
    <location>
        <position position="195"/>
    </location>
    <ligand>
        <name>Mg(2+)</name>
        <dbReference type="ChEBI" id="CHEBI:18420"/>
        <label>1</label>
    </ligand>
</feature>
<feature type="binding site" evidence="1">
    <location>
        <position position="195"/>
    </location>
    <ligand>
        <name>Mg(2+)</name>
        <dbReference type="ChEBI" id="CHEBI:18420"/>
        <label>2</label>
    </ligand>
</feature>
<feature type="binding site" evidence="1">
    <location>
        <position position="199"/>
    </location>
    <ligand>
        <name>Mg(2+)</name>
        <dbReference type="ChEBI" id="CHEBI:18420"/>
        <label>1</label>
    </ligand>
</feature>
<feature type="binding site" evidence="1">
    <location>
        <position position="231"/>
    </location>
    <ligand>
        <name>Mg(2+)</name>
        <dbReference type="ChEBI" id="CHEBI:18420"/>
        <label>2</label>
    </ligand>
</feature>
<feature type="binding site" evidence="1">
    <location>
        <position position="235"/>
    </location>
    <ligand>
        <name>Mg(2+)</name>
        <dbReference type="ChEBI" id="CHEBI:18420"/>
        <label>2</label>
    </ligand>
</feature>
<feature type="binding site" evidence="1">
    <location>
        <position position="256"/>
    </location>
    <ligand>
        <name>substrate</name>
    </ligand>
</feature>
<organism>
    <name type="scientific">Tropheryma whipplei (strain Twist)</name>
    <name type="common">Whipple's bacillus</name>
    <dbReference type="NCBI Taxonomy" id="203267"/>
    <lineage>
        <taxon>Bacteria</taxon>
        <taxon>Bacillati</taxon>
        <taxon>Actinomycetota</taxon>
        <taxon>Actinomycetes</taxon>
        <taxon>Micrococcales</taxon>
        <taxon>Tropherymataceae</taxon>
        <taxon>Tropheryma</taxon>
    </lineage>
</organism>